<dbReference type="EC" id="2.7.4.25" evidence="1"/>
<dbReference type="EMBL" id="CP001337">
    <property type="protein sequence ID" value="ACL24569.1"/>
    <property type="molecule type" value="Genomic_DNA"/>
</dbReference>
<dbReference type="RefSeq" id="WP_015940428.1">
    <property type="nucleotide sequence ID" value="NC_011831.1"/>
</dbReference>
<dbReference type="SMR" id="B8GA54"/>
<dbReference type="STRING" id="326427.Cagg_1668"/>
<dbReference type="KEGG" id="cag:Cagg_1668"/>
<dbReference type="eggNOG" id="COG0283">
    <property type="taxonomic scope" value="Bacteria"/>
</dbReference>
<dbReference type="HOGENOM" id="CLU_079959_0_2_0"/>
<dbReference type="OrthoDB" id="9807434at2"/>
<dbReference type="Proteomes" id="UP000002508">
    <property type="component" value="Chromosome"/>
</dbReference>
<dbReference type="GO" id="GO:0005737">
    <property type="term" value="C:cytoplasm"/>
    <property type="evidence" value="ECO:0007669"/>
    <property type="project" value="UniProtKB-SubCell"/>
</dbReference>
<dbReference type="GO" id="GO:0005524">
    <property type="term" value="F:ATP binding"/>
    <property type="evidence" value="ECO:0007669"/>
    <property type="project" value="UniProtKB-UniRule"/>
</dbReference>
<dbReference type="GO" id="GO:0036430">
    <property type="term" value="F:CMP kinase activity"/>
    <property type="evidence" value="ECO:0007669"/>
    <property type="project" value="RHEA"/>
</dbReference>
<dbReference type="GO" id="GO:0036431">
    <property type="term" value="F:dCMP kinase activity"/>
    <property type="evidence" value="ECO:0007669"/>
    <property type="project" value="RHEA"/>
</dbReference>
<dbReference type="GO" id="GO:0006220">
    <property type="term" value="P:pyrimidine nucleotide metabolic process"/>
    <property type="evidence" value="ECO:0007669"/>
    <property type="project" value="UniProtKB-UniRule"/>
</dbReference>
<dbReference type="CDD" id="cd02020">
    <property type="entry name" value="CMPK"/>
    <property type="match status" value="1"/>
</dbReference>
<dbReference type="Gene3D" id="3.40.50.300">
    <property type="entry name" value="P-loop containing nucleotide triphosphate hydrolases"/>
    <property type="match status" value="1"/>
</dbReference>
<dbReference type="HAMAP" id="MF_00238">
    <property type="entry name" value="Cytidyl_kinase_type1"/>
    <property type="match status" value="1"/>
</dbReference>
<dbReference type="InterPro" id="IPR003136">
    <property type="entry name" value="Cytidylate_kin"/>
</dbReference>
<dbReference type="InterPro" id="IPR011994">
    <property type="entry name" value="Cytidylate_kinase_dom"/>
</dbReference>
<dbReference type="InterPro" id="IPR027417">
    <property type="entry name" value="P-loop_NTPase"/>
</dbReference>
<dbReference type="NCBIfam" id="TIGR00017">
    <property type="entry name" value="cmk"/>
    <property type="match status" value="1"/>
</dbReference>
<dbReference type="Pfam" id="PF02224">
    <property type="entry name" value="Cytidylate_kin"/>
    <property type="match status" value="1"/>
</dbReference>
<dbReference type="SUPFAM" id="SSF52540">
    <property type="entry name" value="P-loop containing nucleoside triphosphate hydrolases"/>
    <property type="match status" value="1"/>
</dbReference>
<comment type="catalytic activity">
    <reaction evidence="1">
        <text>CMP + ATP = CDP + ADP</text>
        <dbReference type="Rhea" id="RHEA:11600"/>
        <dbReference type="ChEBI" id="CHEBI:30616"/>
        <dbReference type="ChEBI" id="CHEBI:58069"/>
        <dbReference type="ChEBI" id="CHEBI:60377"/>
        <dbReference type="ChEBI" id="CHEBI:456216"/>
        <dbReference type="EC" id="2.7.4.25"/>
    </reaction>
</comment>
<comment type="catalytic activity">
    <reaction evidence="1">
        <text>dCMP + ATP = dCDP + ADP</text>
        <dbReference type="Rhea" id="RHEA:25094"/>
        <dbReference type="ChEBI" id="CHEBI:30616"/>
        <dbReference type="ChEBI" id="CHEBI:57566"/>
        <dbReference type="ChEBI" id="CHEBI:58593"/>
        <dbReference type="ChEBI" id="CHEBI:456216"/>
        <dbReference type="EC" id="2.7.4.25"/>
    </reaction>
</comment>
<comment type="subcellular location">
    <subcellularLocation>
        <location evidence="1">Cytoplasm</location>
    </subcellularLocation>
</comment>
<comment type="similarity">
    <text evidence="1">Belongs to the cytidylate kinase family. Type 1 subfamily.</text>
</comment>
<gene>
    <name evidence="1" type="primary">cmk</name>
    <name type="ordered locus">Cagg_1668</name>
</gene>
<feature type="chain" id="PRO_1000125277" description="Cytidylate kinase">
    <location>
        <begin position="1"/>
        <end position="230"/>
    </location>
</feature>
<feature type="binding site" evidence="1">
    <location>
        <begin position="11"/>
        <end position="19"/>
    </location>
    <ligand>
        <name>ATP</name>
        <dbReference type="ChEBI" id="CHEBI:30616"/>
    </ligand>
</feature>
<name>KCY_CHLAD</name>
<evidence type="ECO:0000255" key="1">
    <source>
        <dbReference type="HAMAP-Rule" id="MF_00238"/>
    </source>
</evidence>
<proteinExistence type="inferred from homology"/>
<sequence>MRVPQTIAIDGQSAAGKSTLGALLAEALGYLYFDTGVMYRALALAALRAGIDPDDEAALSELAHQLVIDVTQPTVADGRQYTVLVNGEDVTWAIRSPEVERIVSRAARFPSVRREMVRQQQLIGQRGRVVMVGRDIGTVVMPNADLKIYLQASLAERARRRAAELRSRNIDMPLEQIAAALAERDALDAHVSQPAADAIILVNDGLTPAEEVALVLNRFVYSEQALENGH</sequence>
<keyword id="KW-0067">ATP-binding</keyword>
<keyword id="KW-0963">Cytoplasm</keyword>
<keyword id="KW-0418">Kinase</keyword>
<keyword id="KW-0547">Nucleotide-binding</keyword>
<keyword id="KW-0808">Transferase</keyword>
<reference key="1">
    <citation type="submission" date="2008-12" db="EMBL/GenBank/DDBJ databases">
        <title>Complete sequence of Chloroflexus aggregans DSM 9485.</title>
        <authorList>
            <consortium name="US DOE Joint Genome Institute"/>
            <person name="Lucas S."/>
            <person name="Copeland A."/>
            <person name="Lapidus A."/>
            <person name="Glavina del Rio T."/>
            <person name="Dalin E."/>
            <person name="Tice H."/>
            <person name="Pitluck S."/>
            <person name="Foster B."/>
            <person name="Larimer F."/>
            <person name="Land M."/>
            <person name="Hauser L."/>
            <person name="Kyrpides N."/>
            <person name="Mikhailova N."/>
            <person name="Bryant D.A."/>
            <person name="Richardson P."/>
        </authorList>
    </citation>
    <scope>NUCLEOTIDE SEQUENCE [LARGE SCALE GENOMIC DNA]</scope>
    <source>
        <strain>MD-66 / DSM 9485</strain>
    </source>
</reference>
<protein>
    <recommendedName>
        <fullName evidence="1">Cytidylate kinase</fullName>
        <shortName evidence="1">CK</shortName>
        <ecNumber evidence="1">2.7.4.25</ecNumber>
    </recommendedName>
    <alternativeName>
        <fullName evidence="1">Cytidine monophosphate kinase</fullName>
        <shortName evidence="1">CMP kinase</shortName>
    </alternativeName>
</protein>
<accession>B8GA54</accession>
<organism>
    <name type="scientific">Chloroflexus aggregans (strain MD-66 / DSM 9485)</name>
    <dbReference type="NCBI Taxonomy" id="326427"/>
    <lineage>
        <taxon>Bacteria</taxon>
        <taxon>Bacillati</taxon>
        <taxon>Chloroflexota</taxon>
        <taxon>Chloroflexia</taxon>
        <taxon>Chloroflexales</taxon>
        <taxon>Chloroflexineae</taxon>
        <taxon>Chloroflexaceae</taxon>
        <taxon>Chloroflexus</taxon>
    </lineage>
</organism>